<proteinExistence type="evidence at protein level"/>
<sequence length="321" mass="34950">MAASKRLVVSCLFLVLLFAQANSQGLKVGFYSKTCPQLEGIVKKVVFDAMNKAPTLGAPLLRMFFHDCFVRGCDGSVLLDKPNNQGEKSAVPNLSLRGFGIIDDSKAALEKVCPGIVSCSDILALVARDAMVALEGPSWEVETGRRDGRVSNINEVNLPSPFDNITKLISDFRSKGLNEKDLVILSGGHTIGMGHCPLLTNRLYNFTGKGDSDPSLDSEYAAKLRKKCKPTDTTTALEMDPGSFKTFDLSYFTLVAKRRGLFQSDAALLDNSKTRAYVLQQIRTHGSMFFNDFGVSMVKMGRTGVLTGKAGEIRKTCRSAN</sequence>
<organism>
    <name type="scientific">Arabidopsis thaliana</name>
    <name type="common">Mouse-ear cress</name>
    <dbReference type="NCBI Taxonomy" id="3702"/>
    <lineage>
        <taxon>Eukaryota</taxon>
        <taxon>Viridiplantae</taxon>
        <taxon>Streptophyta</taxon>
        <taxon>Embryophyta</taxon>
        <taxon>Tracheophyta</taxon>
        <taxon>Spermatophyta</taxon>
        <taxon>Magnoliopsida</taxon>
        <taxon>eudicotyledons</taxon>
        <taxon>Gunneridae</taxon>
        <taxon>Pentapetalae</taxon>
        <taxon>rosids</taxon>
        <taxon>malvids</taxon>
        <taxon>Brassicales</taxon>
        <taxon>Brassicaceae</taxon>
        <taxon>Camelineae</taxon>
        <taxon>Arabidopsis</taxon>
    </lineage>
</organism>
<keyword id="KW-0106">Calcium</keyword>
<keyword id="KW-1015">Disulfide bond</keyword>
<keyword id="KW-0325">Glycoprotein</keyword>
<keyword id="KW-0349">Heme</keyword>
<keyword id="KW-0376">Hydrogen peroxide</keyword>
<keyword id="KW-0408">Iron</keyword>
<keyword id="KW-0479">Metal-binding</keyword>
<keyword id="KW-0560">Oxidoreductase</keyword>
<keyword id="KW-0575">Peroxidase</keyword>
<keyword id="KW-1185">Reference proteome</keyword>
<keyword id="KW-0964">Secreted</keyword>
<keyword id="KW-0732">Signal</keyword>
<protein>
    <recommendedName>
        <fullName>Peroxidase 27</fullName>
        <shortName>Atperox P27</shortName>
        <ecNumber>1.11.1.7</ecNumber>
    </recommendedName>
    <alternativeName>
        <fullName>ATP12a</fullName>
    </alternativeName>
    <alternativeName>
        <fullName>PRXR7</fullName>
    </alternativeName>
</protein>
<accession>Q43735</accession>
<feature type="signal peptide" evidence="1">
    <location>
        <begin position="1"/>
        <end position="23"/>
    </location>
</feature>
<feature type="chain" id="PRO_0000023693" description="Peroxidase 27">
    <location>
        <begin position="24"/>
        <end position="321"/>
    </location>
</feature>
<feature type="active site" description="Proton acceptor">
    <location>
        <position position="66"/>
    </location>
</feature>
<feature type="binding site" evidence="2">
    <location>
        <position position="67"/>
    </location>
    <ligand>
        <name>Ca(2+)</name>
        <dbReference type="ChEBI" id="CHEBI:29108"/>
        <label>1</label>
    </ligand>
</feature>
<feature type="binding site" evidence="2">
    <location>
        <position position="70"/>
    </location>
    <ligand>
        <name>Ca(2+)</name>
        <dbReference type="ChEBI" id="CHEBI:29108"/>
        <label>1</label>
    </ligand>
</feature>
<feature type="binding site" evidence="2">
    <location>
        <position position="72"/>
    </location>
    <ligand>
        <name>Ca(2+)</name>
        <dbReference type="ChEBI" id="CHEBI:29108"/>
        <label>1</label>
    </ligand>
</feature>
<feature type="binding site" evidence="2">
    <location>
        <position position="74"/>
    </location>
    <ligand>
        <name>Ca(2+)</name>
        <dbReference type="ChEBI" id="CHEBI:29108"/>
        <label>1</label>
    </ligand>
</feature>
<feature type="binding site" evidence="2">
    <location>
        <position position="76"/>
    </location>
    <ligand>
        <name>Ca(2+)</name>
        <dbReference type="ChEBI" id="CHEBI:29108"/>
        <label>1</label>
    </ligand>
</feature>
<feature type="binding site" evidence="2">
    <location>
        <position position="159"/>
    </location>
    <ligand>
        <name>substrate</name>
    </ligand>
</feature>
<feature type="binding site" description="axial binding residue" evidence="2">
    <location>
        <position position="189"/>
    </location>
    <ligand>
        <name>heme b</name>
        <dbReference type="ChEBI" id="CHEBI:60344"/>
    </ligand>
    <ligandPart>
        <name>Fe</name>
        <dbReference type="ChEBI" id="CHEBI:18248"/>
    </ligandPart>
</feature>
<feature type="binding site" evidence="2">
    <location>
        <position position="190"/>
    </location>
    <ligand>
        <name>Ca(2+)</name>
        <dbReference type="ChEBI" id="CHEBI:29108"/>
        <label>2</label>
    </ligand>
</feature>
<feature type="binding site" evidence="2">
    <location>
        <position position="240"/>
    </location>
    <ligand>
        <name>Ca(2+)</name>
        <dbReference type="ChEBI" id="CHEBI:29108"/>
        <label>2</label>
    </ligand>
</feature>
<feature type="binding site" evidence="2">
    <location>
        <position position="243"/>
    </location>
    <ligand>
        <name>Ca(2+)</name>
        <dbReference type="ChEBI" id="CHEBI:29108"/>
        <label>2</label>
    </ligand>
</feature>
<feature type="binding site" evidence="2">
    <location>
        <position position="248"/>
    </location>
    <ligand>
        <name>Ca(2+)</name>
        <dbReference type="ChEBI" id="CHEBI:29108"/>
        <label>2</label>
    </ligand>
</feature>
<feature type="site" description="Transition state stabilizer" evidence="2">
    <location>
        <position position="62"/>
    </location>
</feature>
<feature type="glycosylation site" description="N-linked (GlcNAc...) asparagine" evidence="1">
    <location>
        <position position="164"/>
    </location>
</feature>
<feature type="glycosylation site" description="N-linked (GlcNAc...) asparagine" evidence="1">
    <location>
        <position position="205"/>
    </location>
</feature>
<feature type="disulfide bond" evidence="2">
    <location>
        <begin position="35"/>
        <end position="113"/>
    </location>
</feature>
<feature type="disulfide bond" evidence="2">
    <location>
        <begin position="68"/>
        <end position="73"/>
    </location>
</feature>
<feature type="disulfide bond" evidence="2">
    <location>
        <begin position="119"/>
        <end position="317"/>
    </location>
</feature>
<feature type="disulfide bond" evidence="2">
    <location>
        <begin position="196"/>
        <end position="228"/>
    </location>
</feature>
<comment type="function">
    <text>Removal of H(2)O(2), oxidation of toxic reductants, biosynthesis and degradation of lignin, suberization, auxin catabolism, response to environmental stresses such as wounding, pathogen attack and oxidative stress. These functions might be dependent on each isozyme/isoform in each plant tissue.</text>
</comment>
<comment type="catalytic activity">
    <reaction>
        <text>2 a phenolic donor + H2O2 = 2 a phenolic radical donor + 2 H2O</text>
        <dbReference type="Rhea" id="RHEA:56136"/>
        <dbReference type="ChEBI" id="CHEBI:15377"/>
        <dbReference type="ChEBI" id="CHEBI:16240"/>
        <dbReference type="ChEBI" id="CHEBI:139520"/>
        <dbReference type="ChEBI" id="CHEBI:139521"/>
        <dbReference type="EC" id="1.11.1.7"/>
    </reaction>
</comment>
<comment type="cofactor">
    <cofactor evidence="2">
        <name>heme b</name>
        <dbReference type="ChEBI" id="CHEBI:60344"/>
    </cofactor>
    <text evidence="2">Binds 1 heme b (iron(II)-protoporphyrin IX) group per subunit.</text>
</comment>
<comment type="cofactor">
    <cofactor evidence="2">
        <name>Ca(2+)</name>
        <dbReference type="ChEBI" id="CHEBI:29108"/>
    </cofactor>
    <text evidence="2">Binds 2 calcium ions per subunit.</text>
</comment>
<comment type="subcellular location">
    <subcellularLocation>
        <location evidence="2">Secreted</location>
    </subcellularLocation>
</comment>
<comment type="tissue specificity">
    <text evidence="4 5">Expressed in the whole plant, but preferentially in roots and flowers.</text>
</comment>
<comment type="induction">
    <text evidence="3">Up-regulated transiently by a cold treatment.</text>
</comment>
<comment type="miscellaneous">
    <text>There are 73 peroxidase genes in A.thaliana.</text>
</comment>
<comment type="similarity">
    <text evidence="2">Belongs to the peroxidase family. Classical plant (class III) peroxidase subfamily.</text>
</comment>
<reference key="1">
    <citation type="online journal article" date="1996" name="Plant Gene Register">
        <title>Eleven cDNA clones from Arabidopsis thaliana encoding isoperoxidases.</title>
        <authorList>
            <person name="Capelli N."/>
            <person name="Tognolli M."/>
            <person name="Flach J."/>
            <person name="Overney S."/>
            <person name="Penel C."/>
            <person name="Greppin H."/>
            <person name="Simon P."/>
        </authorList>
        <locator>PGR96-066</locator>
    </citation>
    <scope>NUCLEOTIDE SEQUENCE [MRNA]</scope>
    <source>
        <strain>cv. Columbia</strain>
    </source>
</reference>
<reference key="2">
    <citation type="submission" date="1996-07" db="EMBL/GenBank/DDBJ databases">
        <title>From expressed sequence tags to structure, function, evolution and expression of 28 ER-targeted Arabidopsis peroxidases.</title>
        <authorList>
            <person name="Welinder K.G."/>
            <person name="Jespersen H.M."/>
            <person name="Kjaersgaard I.V.H."/>
            <person name="Justesen A.F."/>
            <person name="Oestergaard L."/>
            <person name="Abelskov A.K."/>
            <person name="Jensen R.B."/>
            <person name="Hansen L.N."/>
            <person name="Rasmussen S.K."/>
        </authorList>
    </citation>
    <scope>NUCLEOTIDE SEQUENCE [MRNA]</scope>
    <source>
        <strain>cv. Columbia</strain>
    </source>
</reference>
<reference key="3">
    <citation type="journal article" date="2000" name="Nature">
        <title>Sequence and analysis of chromosome 3 of the plant Arabidopsis thaliana.</title>
        <authorList>
            <person name="Salanoubat M."/>
            <person name="Lemcke K."/>
            <person name="Rieger M."/>
            <person name="Ansorge W."/>
            <person name="Unseld M."/>
            <person name="Fartmann B."/>
            <person name="Valle G."/>
            <person name="Bloecker H."/>
            <person name="Perez-Alonso M."/>
            <person name="Obermaier B."/>
            <person name="Delseny M."/>
            <person name="Boutry M."/>
            <person name="Grivell L.A."/>
            <person name="Mache R."/>
            <person name="Puigdomenech P."/>
            <person name="De Simone V."/>
            <person name="Choisne N."/>
            <person name="Artiguenave F."/>
            <person name="Robert C."/>
            <person name="Brottier P."/>
            <person name="Wincker P."/>
            <person name="Cattolico L."/>
            <person name="Weissenbach J."/>
            <person name="Saurin W."/>
            <person name="Quetier F."/>
            <person name="Schaefer M."/>
            <person name="Mueller-Auer S."/>
            <person name="Gabel C."/>
            <person name="Fuchs M."/>
            <person name="Benes V."/>
            <person name="Wurmbach E."/>
            <person name="Drzonek H."/>
            <person name="Erfle H."/>
            <person name="Jordan N."/>
            <person name="Bangert S."/>
            <person name="Wiedelmann R."/>
            <person name="Kranz H."/>
            <person name="Voss H."/>
            <person name="Holland R."/>
            <person name="Brandt P."/>
            <person name="Nyakatura G."/>
            <person name="Vezzi A."/>
            <person name="D'Angelo M."/>
            <person name="Pallavicini A."/>
            <person name="Toppo S."/>
            <person name="Simionati B."/>
            <person name="Conrad A."/>
            <person name="Hornischer K."/>
            <person name="Kauer G."/>
            <person name="Loehnert T.-H."/>
            <person name="Nordsiek G."/>
            <person name="Reichelt J."/>
            <person name="Scharfe M."/>
            <person name="Schoen O."/>
            <person name="Bargues M."/>
            <person name="Terol J."/>
            <person name="Climent J."/>
            <person name="Navarro P."/>
            <person name="Collado C."/>
            <person name="Perez-Perez A."/>
            <person name="Ottenwaelder B."/>
            <person name="Duchemin D."/>
            <person name="Cooke R."/>
            <person name="Laudie M."/>
            <person name="Berger-Llauro C."/>
            <person name="Purnelle B."/>
            <person name="Masuy D."/>
            <person name="de Haan M."/>
            <person name="Maarse A.C."/>
            <person name="Alcaraz J.-P."/>
            <person name="Cottet A."/>
            <person name="Casacuberta E."/>
            <person name="Monfort A."/>
            <person name="Argiriou A."/>
            <person name="Flores M."/>
            <person name="Liguori R."/>
            <person name="Vitale D."/>
            <person name="Mannhaupt G."/>
            <person name="Haase D."/>
            <person name="Schoof H."/>
            <person name="Rudd S."/>
            <person name="Zaccaria P."/>
            <person name="Mewes H.-W."/>
            <person name="Mayer K.F.X."/>
            <person name="Kaul S."/>
            <person name="Town C.D."/>
            <person name="Koo H.L."/>
            <person name="Tallon L.J."/>
            <person name="Jenkins J."/>
            <person name="Rooney T."/>
            <person name="Rizzo M."/>
            <person name="Walts A."/>
            <person name="Utterback T."/>
            <person name="Fujii C.Y."/>
            <person name="Shea T.P."/>
            <person name="Creasy T.H."/>
            <person name="Haas B."/>
            <person name="Maiti R."/>
            <person name="Wu D."/>
            <person name="Peterson J."/>
            <person name="Van Aken S."/>
            <person name="Pai G."/>
            <person name="Militscher J."/>
            <person name="Sellers P."/>
            <person name="Gill J.E."/>
            <person name="Feldblyum T.V."/>
            <person name="Preuss D."/>
            <person name="Lin X."/>
            <person name="Nierman W.C."/>
            <person name="Salzberg S.L."/>
            <person name="White O."/>
            <person name="Venter J.C."/>
            <person name="Fraser C.M."/>
            <person name="Kaneko T."/>
            <person name="Nakamura Y."/>
            <person name="Sato S."/>
            <person name="Kato T."/>
            <person name="Asamizu E."/>
            <person name="Sasamoto S."/>
            <person name="Kimura T."/>
            <person name="Idesawa K."/>
            <person name="Kawashima K."/>
            <person name="Kishida Y."/>
            <person name="Kiyokawa C."/>
            <person name="Kohara M."/>
            <person name="Matsumoto M."/>
            <person name="Matsuno A."/>
            <person name="Muraki A."/>
            <person name="Nakayama S."/>
            <person name="Nakazaki N."/>
            <person name="Shinpo S."/>
            <person name="Takeuchi C."/>
            <person name="Wada T."/>
            <person name="Watanabe A."/>
            <person name="Yamada M."/>
            <person name="Yasuda M."/>
            <person name="Tabata S."/>
        </authorList>
    </citation>
    <scope>NUCLEOTIDE SEQUENCE [LARGE SCALE GENOMIC DNA]</scope>
    <source>
        <strain>cv. Columbia</strain>
    </source>
</reference>
<reference key="4">
    <citation type="journal article" date="2017" name="Plant J.">
        <title>Araport11: a complete reannotation of the Arabidopsis thaliana reference genome.</title>
        <authorList>
            <person name="Cheng C.Y."/>
            <person name="Krishnakumar V."/>
            <person name="Chan A.P."/>
            <person name="Thibaud-Nissen F."/>
            <person name="Schobel S."/>
            <person name="Town C.D."/>
        </authorList>
    </citation>
    <scope>GENOME REANNOTATION</scope>
    <source>
        <strain>cv. Columbia</strain>
    </source>
</reference>
<reference key="5">
    <citation type="journal article" date="2003" name="Science">
        <title>Empirical analysis of transcriptional activity in the Arabidopsis genome.</title>
        <authorList>
            <person name="Yamada K."/>
            <person name="Lim J."/>
            <person name="Dale J.M."/>
            <person name="Chen H."/>
            <person name="Shinn P."/>
            <person name="Palm C.J."/>
            <person name="Southwick A.M."/>
            <person name="Wu H.C."/>
            <person name="Kim C.J."/>
            <person name="Nguyen M."/>
            <person name="Pham P.K."/>
            <person name="Cheuk R.F."/>
            <person name="Karlin-Newmann G."/>
            <person name="Liu S.X."/>
            <person name="Lam B."/>
            <person name="Sakano H."/>
            <person name="Wu T."/>
            <person name="Yu G."/>
            <person name="Miranda M."/>
            <person name="Quach H.L."/>
            <person name="Tripp M."/>
            <person name="Chang C.H."/>
            <person name="Lee J.M."/>
            <person name="Toriumi M.J."/>
            <person name="Chan M.M."/>
            <person name="Tang C.C."/>
            <person name="Onodera C.S."/>
            <person name="Deng J.M."/>
            <person name="Akiyama K."/>
            <person name="Ansari Y."/>
            <person name="Arakawa T."/>
            <person name="Banh J."/>
            <person name="Banno F."/>
            <person name="Bowser L."/>
            <person name="Brooks S.Y."/>
            <person name="Carninci P."/>
            <person name="Chao Q."/>
            <person name="Choy N."/>
            <person name="Enju A."/>
            <person name="Goldsmith A.D."/>
            <person name="Gurjal M."/>
            <person name="Hansen N.F."/>
            <person name="Hayashizaki Y."/>
            <person name="Johnson-Hopson C."/>
            <person name="Hsuan V.W."/>
            <person name="Iida K."/>
            <person name="Karnes M."/>
            <person name="Khan S."/>
            <person name="Koesema E."/>
            <person name="Ishida J."/>
            <person name="Jiang P.X."/>
            <person name="Jones T."/>
            <person name="Kawai J."/>
            <person name="Kamiya A."/>
            <person name="Meyers C."/>
            <person name="Nakajima M."/>
            <person name="Narusaka M."/>
            <person name="Seki M."/>
            <person name="Sakurai T."/>
            <person name="Satou M."/>
            <person name="Tamse R."/>
            <person name="Vaysberg M."/>
            <person name="Wallender E.K."/>
            <person name="Wong C."/>
            <person name="Yamamura Y."/>
            <person name="Yuan S."/>
            <person name="Shinozaki K."/>
            <person name="Davis R.W."/>
            <person name="Theologis A."/>
            <person name="Ecker J.R."/>
        </authorList>
    </citation>
    <scope>NUCLEOTIDE SEQUENCE [LARGE SCALE MRNA]</scope>
    <source>
        <strain>cv. Columbia</strain>
    </source>
</reference>
<reference key="6">
    <citation type="submission" date="2002-03" db="EMBL/GenBank/DDBJ databases">
        <title>Full-length cDNA from Arabidopsis thaliana.</title>
        <authorList>
            <person name="Brover V.V."/>
            <person name="Troukhan M.E."/>
            <person name="Alexandrov N.A."/>
            <person name="Lu Y.-P."/>
            <person name="Flavell R.B."/>
            <person name="Feldmann K.A."/>
        </authorList>
    </citation>
    <scope>NUCLEOTIDE SEQUENCE [LARGE SCALE MRNA]</scope>
</reference>
<reference key="7">
    <citation type="journal article" date="1998" name="FEBS Lett.">
        <title>Computational analyses and annotations of the Arabidopsis peroxidase gene family.</title>
        <authorList>
            <person name="Oestergaard L."/>
            <person name="Pedersen A.G."/>
            <person name="Jespersen H.M."/>
            <person name="Brunak S."/>
            <person name="Welinder K.G."/>
        </authorList>
    </citation>
    <scope>CHARACTERIZATION</scope>
    <source>
        <strain>cv. Columbia</strain>
    </source>
</reference>
<reference key="8">
    <citation type="journal article" date="1998" name="Plant J.">
        <title>Towards Arabidopsis genome analysis: monitoring expression profiles of 1400 genes using cDNA microarrays.</title>
        <authorList>
            <person name="Ruan Y."/>
            <person name="Gilmore J."/>
            <person name="Conner T."/>
        </authorList>
    </citation>
    <scope>TISSUE SPECIFICITY</scope>
    <source>
        <strain>cv. Columbia</strain>
    </source>
</reference>
<reference key="9">
    <citation type="journal article" date="2001" name="Plant Physiol. Biochem.">
        <title>Toward elucidating the global gene expression patterns of developing Arabidopsis: parallel analysis of 8300 genes by a high-density oligonucleotide probe array.</title>
        <authorList>
            <person name="Zhu T."/>
            <person name="Budworth P."/>
            <person name="Han B."/>
            <person name="Brown D."/>
            <person name="Chang H.-S."/>
            <person name="Zou G."/>
            <person name="Wang X."/>
        </authorList>
    </citation>
    <scope>TISSUE SPECIFICITY</scope>
    <source>
        <strain>cv. Columbia</strain>
    </source>
</reference>
<reference key="10">
    <citation type="journal article" date="2002" name="Plant Cell">
        <title>Arabidopsis transcriptome profiling indicates that multiple regulatory pathways are activated during cold acclimation in addition to the CBF cold response pathway.</title>
        <authorList>
            <person name="Fowler S."/>
            <person name="Thomashow M.F."/>
        </authorList>
    </citation>
    <scope>INDUCTION</scope>
    <source>
        <strain>cv. Columbia</strain>
    </source>
</reference>
<reference key="11">
    <citation type="journal article" date="2002" name="Gene">
        <title>Analysis and expression of the class III peroxidase large gene family in Arabidopsis thaliana.</title>
        <authorList>
            <person name="Tognolli M."/>
            <person name="Penel C."/>
            <person name="Greppin H."/>
            <person name="Simon P."/>
        </authorList>
    </citation>
    <scope>GENE FAMILY ORGANIZATION</scope>
    <scope>NOMENCLATURE</scope>
    <source>
        <strain>cv. Columbia</strain>
    </source>
</reference>
<dbReference type="EC" id="1.11.1.7"/>
<dbReference type="EMBL" id="X98319">
    <property type="protein sequence ID" value="CAA66963.1"/>
    <property type="molecule type" value="mRNA"/>
</dbReference>
<dbReference type="EMBL" id="X98775">
    <property type="protein sequence ID" value="CAA67311.1"/>
    <property type="molecule type" value="mRNA"/>
</dbReference>
<dbReference type="EMBL" id="AC008261">
    <property type="protein sequence ID" value="AAF26155.1"/>
    <property type="molecule type" value="Genomic_DNA"/>
</dbReference>
<dbReference type="EMBL" id="CP002686">
    <property type="protein sequence ID" value="AEE73623.1"/>
    <property type="molecule type" value="Genomic_DNA"/>
</dbReference>
<dbReference type="EMBL" id="AY062810">
    <property type="protein sequence ID" value="AAL32888.1"/>
    <property type="molecule type" value="mRNA"/>
</dbReference>
<dbReference type="EMBL" id="AY081573">
    <property type="protein sequence ID" value="AAM10135.1"/>
    <property type="molecule type" value="mRNA"/>
</dbReference>
<dbReference type="EMBL" id="AY087679">
    <property type="protein sequence ID" value="AAM65216.1"/>
    <property type="molecule type" value="mRNA"/>
</dbReference>
<dbReference type="RefSeq" id="NP_186768.1">
    <property type="nucleotide sequence ID" value="NM_110985.3"/>
</dbReference>
<dbReference type="SMR" id="Q43735"/>
<dbReference type="FunCoup" id="Q43735">
    <property type="interactions" value="149"/>
</dbReference>
<dbReference type="STRING" id="3702.Q43735"/>
<dbReference type="PeroxiBase" id="120">
    <property type="entry name" value="AtPrx27"/>
</dbReference>
<dbReference type="GlyCosmos" id="Q43735">
    <property type="glycosylation" value="2 sites, No reported glycans"/>
</dbReference>
<dbReference type="GlyGen" id="Q43735">
    <property type="glycosylation" value="2 sites"/>
</dbReference>
<dbReference type="PaxDb" id="3702-AT3G01190.1"/>
<dbReference type="ProteomicsDB" id="236694"/>
<dbReference type="EnsemblPlants" id="AT3G01190.1">
    <property type="protein sequence ID" value="AT3G01190.1"/>
    <property type="gene ID" value="AT3G01190"/>
</dbReference>
<dbReference type="GeneID" id="821314"/>
<dbReference type="Gramene" id="AT3G01190.1">
    <property type="protein sequence ID" value="AT3G01190.1"/>
    <property type="gene ID" value="AT3G01190"/>
</dbReference>
<dbReference type="KEGG" id="ath:AT3G01190"/>
<dbReference type="Araport" id="AT3G01190"/>
<dbReference type="TAIR" id="AT3G01190"/>
<dbReference type="eggNOG" id="ENOG502QQVF">
    <property type="taxonomic scope" value="Eukaryota"/>
</dbReference>
<dbReference type="HOGENOM" id="CLU_010543_0_3_1"/>
<dbReference type="InParanoid" id="Q43735"/>
<dbReference type="OMA" id="MAQLEMD"/>
<dbReference type="OrthoDB" id="2113341at2759"/>
<dbReference type="PhylomeDB" id="Q43735"/>
<dbReference type="BioCyc" id="ARA:AT3G01190-MONOMER"/>
<dbReference type="PRO" id="PR:Q43735"/>
<dbReference type="Proteomes" id="UP000006548">
    <property type="component" value="Chromosome 3"/>
</dbReference>
<dbReference type="ExpressionAtlas" id="Q43735">
    <property type="expression patterns" value="baseline and differential"/>
</dbReference>
<dbReference type="GO" id="GO:0005576">
    <property type="term" value="C:extracellular region"/>
    <property type="evidence" value="ECO:0007669"/>
    <property type="project" value="UniProtKB-SubCell"/>
</dbReference>
<dbReference type="GO" id="GO:0020037">
    <property type="term" value="F:heme binding"/>
    <property type="evidence" value="ECO:0007669"/>
    <property type="project" value="InterPro"/>
</dbReference>
<dbReference type="GO" id="GO:0140825">
    <property type="term" value="F:lactoperoxidase activity"/>
    <property type="evidence" value="ECO:0007669"/>
    <property type="project" value="UniProtKB-EC"/>
</dbReference>
<dbReference type="GO" id="GO:0046872">
    <property type="term" value="F:metal ion binding"/>
    <property type="evidence" value="ECO:0007669"/>
    <property type="project" value="UniProtKB-KW"/>
</dbReference>
<dbReference type="GO" id="GO:0042744">
    <property type="term" value="P:hydrogen peroxide catabolic process"/>
    <property type="evidence" value="ECO:0007669"/>
    <property type="project" value="UniProtKB-KW"/>
</dbReference>
<dbReference type="GO" id="GO:0006979">
    <property type="term" value="P:response to oxidative stress"/>
    <property type="evidence" value="ECO:0007669"/>
    <property type="project" value="InterPro"/>
</dbReference>
<dbReference type="CDD" id="cd00693">
    <property type="entry name" value="secretory_peroxidase"/>
    <property type="match status" value="1"/>
</dbReference>
<dbReference type="FunFam" id="1.10.420.10:FF:000008">
    <property type="entry name" value="Peroxidase"/>
    <property type="match status" value="1"/>
</dbReference>
<dbReference type="FunFam" id="1.10.520.10:FF:000001">
    <property type="entry name" value="Peroxidase"/>
    <property type="match status" value="1"/>
</dbReference>
<dbReference type="Gene3D" id="1.10.520.10">
    <property type="match status" value="1"/>
</dbReference>
<dbReference type="Gene3D" id="1.10.420.10">
    <property type="entry name" value="Peroxidase, domain 2"/>
    <property type="match status" value="1"/>
</dbReference>
<dbReference type="InterPro" id="IPR002016">
    <property type="entry name" value="Haem_peroxidase"/>
</dbReference>
<dbReference type="InterPro" id="IPR010255">
    <property type="entry name" value="Haem_peroxidase_sf"/>
</dbReference>
<dbReference type="InterPro" id="IPR000823">
    <property type="entry name" value="Peroxidase_pln"/>
</dbReference>
<dbReference type="InterPro" id="IPR019794">
    <property type="entry name" value="Peroxidases_AS"/>
</dbReference>
<dbReference type="InterPro" id="IPR019793">
    <property type="entry name" value="Peroxidases_heam-ligand_BS"/>
</dbReference>
<dbReference type="InterPro" id="IPR033905">
    <property type="entry name" value="Secretory_peroxidase"/>
</dbReference>
<dbReference type="PANTHER" id="PTHR31235">
    <property type="entry name" value="PEROXIDASE 25-RELATED"/>
    <property type="match status" value="1"/>
</dbReference>
<dbReference type="Pfam" id="PF00141">
    <property type="entry name" value="peroxidase"/>
    <property type="match status" value="1"/>
</dbReference>
<dbReference type="PRINTS" id="PR00458">
    <property type="entry name" value="PEROXIDASE"/>
</dbReference>
<dbReference type="PRINTS" id="PR00461">
    <property type="entry name" value="PLPEROXIDASE"/>
</dbReference>
<dbReference type="SUPFAM" id="SSF48113">
    <property type="entry name" value="Heme-dependent peroxidases"/>
    <property type="match status" value="1"/>
</dbReference>
<dbReference type="PROSITE" id="PS00435">
    <property type="entry name" value="PEROXIDASE_1"/>
    <property type="match status" value="1"/>
</dbReference>
<dbReference type="PROSITE" id="PS00436">
    <property type="entry name" value="PEROXIDASE_2"/>
    <property type="match status" value="1"/>
</dbReference>
<dbReference type="PROSITE" id="PS50873">
    <property type="entry name" value="PEROXIDASE_4"/>
    <property type="match status" value="1"/>
</dbReference>
<name>PER27_ARATH</name>
<evidence type="ECO:0000255" key="1"/>
<evidence type="ECO:0000255" key="2">
    <source>
        <dbReference type="PROSITE-ProRule" id="PRU00297"/>
    </source>
</evidence>
<evidence type="ECO:0000269" key="3">
    <source>
    </source>
</evidence>
<evidence type="ECO:0000269" key="4">
    <source>
    </source>
</evidence>
<evidence type="ECO:0000269" key="5">
    <source ref="9"/>
</evidence>
<gene>
    <name type="primary">PER27</name>
    <name type="synonym">P27</name>
    <name type="ordered locus">At3g01190</name>
    <name type="ORF">T4P13.12</name>
</gene>